<feature type="chain" id="PRO_1000083346" description="Ribosomal protein L11 methyltransferase">
    <location>
        <begin position="1"/>
        <end position="312"/>
    </location>
</feature>
<feature type="binding site" evidence="1">
    <location>
        <position position="162"/>
    </location>
    <ligand>
        <name>S-adenosyl-L-methionine</name>
        <dbReference type="ChEBI" id="CHEBI:59789"/>
    </ligand>
</feature>
<feature type="binding site" evidence="1">
    <location>
        <position position="183"/>
    </location>
    <ligand>
        <name>S-adenosyl-L-methionine</name>
        <dbReference type="ChEBI" id="CHEBI:59789"/>
    </ligand>
</feature>
<feature type="binding site" evidence="1">
    <location>
        <position position="205"/>
    </location>
    <ligand>
        <name>S-adenosyl-L-methionine</name>
        <dbReference type="ChEBI" id="CHEBI:59789"/>
    </ligand>
</feature>
<feature type="binding site" evidence="1">
    <location>
        <position position="248"/>
    </location>
    <ligand>
        <name>S-adenosyl-L-methionine</name>
        <dbReference type="ChEBI" id="CHEBI:59789"/>
    </ligand>
</feature>
<sequence length="312" mass="33681">MKWSEISIHTTEEAVEAVSHILHEAGASGVAIEDPAELTKEREQQYGEIYALNPAEYPADGVVIKAYFPQTDSLQETIASLKSSIDVLPSYDIEIGTGNITINEVDEEDWATAWKKYYHPVQISDTFTIVPTWEEYTPSSPDEKIIELDPGMAFGTGTHPTTTMCIRALEKTVKPGDTVIDVGTGSGVLSIAAAKLGAASVQAYDLDPVAVESAEMNVRLNKTDDVVSVGQNSLLEGIEGPVDLIVANLLAEIILMFPEDAARVVKQGGLFITSGIIAAKEKTISEALEKAGFTIKEVLRMEDWVAIIAQNA</sequence>
<dbReference type="EC" id="2.1.1.-" evidence="1"/>
<dbReference type="EMBL" id="CP000764">
    <property type="protein sequence ID" value="ABS23264.1"/>
    <property type="molecule type" value="Genomic_DNA"/>
</dbReference>
<dbReference type="RefSeq" id="WP_012095501.1">
    <property type="nucleotide sequence ID" value="NC_009674.1"/>
</dbReference>
<dbReference type="SMR" id="A7GT06"/>
<dbReference type="STRING" id="315749.Bcer98_3038"/>
<dbReference type="GeneID" id="33898284"/>
<dbReference type="KEGG" id="bcy:Bcer98_3038"/>
<dbReference type="eggNOG" id="COG2264">
    <property type="taxonomic scope" value="Bacteria"/>
</dbReference>
<dbReference type="HOGENOM" id="CLU_049382_0_1_9"/>
<dbReference type="OrthoDB" id="9785995at2"/>
<dbReference type="Proteomes" id="UP000002300">
    <property type="component" value="Chromosome"/>
</dbReference>
<dbReference type="GO" id="GO:0005737">
    <property type="term" value="C:cytoplasm"/>
    <property type="evidence" value="ECO:0007669"/>
    <property type="project" value="UniProtKB-SubCell"/>
</dbReference>
<dbReference type="GO" id="GO:0016279">
    <property type="term" value="F:protein-lysine N-methyltransferase activity"/>
    <property type="evidence" value="ECO:0007669"/>
    <property type="project" value="RHEA"/>
</dbReference>
<dbReference type="GO" id="GO:0032259">
    <property type="term" value="P:methylation"/>
    <property type="evidence" value="ECO:0007669"/>
    <property type="project" value="UniProtKB-KW"/>
</dbReference>
<dbReference type="CDD" id="cd02440">
    <property type="entry name" value="AdoMet_MTases"/>
    <property type="match status" value="1"/>
</dbReference>
<dbReference type="Gene3D" id="3.40.50.150">
    <property type="entry name" value="Vaccinia Virus protein VP39"/>
    <property type="match status" value="1"/>
</dbReference>
<dbReference type="HAMAP" id="MF_00735">
    <property type="entry name" value="Methyltr_PrmA"/>
    <property type="match status" value="1"/>
</dbReference>
<dbReference type="InterPro" id="IPR050078">
    <property type="entry name" value="Ribosomal_L11_MeTrfase_PrmA"/>
</dbReference>
<dbReference type="InterPro" id="IPR004498">
    <property type="entry name" value="Ribosomal_PrmA_MeTrfase"/>
</dbReference>
<dbReference type="InterPro" id="IPR029063">
    <property type="entry name" value="SAM-dependent_MTases_sf"/>
</dbReference>
<dbReference type="NCBIfam" id="TIGR00406">
    <property type="entry name" value="prmA"/>
    <property type="match status" value="1"/>
</dbReference>
<dbReference type="PANTHER" id="PTHR43648">
    <property type="entry name" value="ELECTRON TRANSFER FLAVOPROTEIN BETA SUBUNIT LYSINE METHYLTRANSFERASE"/>
    <property type="match status" value="1"/>
</dbReference>
<dbReference type="PANTHER" id="PTHR43648:SF1">
    <property type="entry name" value="ELECTRON TRANSFER FLAVOPROTEIN BETA SUBUNIT LYSINE METHYLTRANSFERASE"/>
    <property type="match status" value="1"/>
</dbReference>
<dbReference type="Pfam" id="PF06325">
    <property type="entry name" value="PrmA"/>
    <property type="match status" value="1"/>
</dbReference>
<dbReference type="PIRSF" id="PIRSF000401">
    <property type="entry name" value="RPL11_MTase"/>
    <property type="match status" value="1"/>
</dbReference>
<dbReference type="SUPFAM" id="SSF53335">
    <property type="entry name" value="S-adenosyl-L-methionine-dependent methyltransferases"/>
    <property type="match status" value="1"/>
</dbReference>
<organism>
    <name type="scientific">Bacillus cytotoxicus (strain DSM 22905 / CIP 110041 / 391-98 / NVH 391-98)</name>
    <dbReference type="NCBI Taxonomy" id="315749"/>
    <lineage>
        <taxon>Bacteria</taxon>
        <taxon>Bacillati</taxon>
        <taxon>Bacillota</taxon>
        <taxon>Bacilli</taxon>
        <taxon>Bacillales</taxon>
        <taxon>Bacillaceae</taxon>
        <taxon>Bacillus</taxon>
        <taxon>Bacillus cereus group</taxon>
    </lineage>
</organism>
<accession>A7GT06</accession>
<keyword id="KW-0963">Cytoplasm</keyword>
<keyword id="KW-0489">Methyltransferase</keyword>
<keyword id="KW-0949">S-adenosyl-L-methionine</keyword>
<keyword id="KW-0808">Transferase</keyword>
<protein>
    <recommendedName>
        <fullName evidence="1">Ribosomal protein L11 methyltransferase</fullName>
        <shortName evidence="1">L11 Mtase</shortName>
        <ecNumber evidence="1">2.1.1.-</ecNumber>
    </recommendedName>
</protein>
<comment type="function">
    <text evidence="1">Methylates ribosomal protein L11.</text>
</comment>
<comment type="catalytic activity">
    <reaction evidence="1">
        <text>L-lysyl-[protein] + 3 S-adenosyl-L-methionine = N(6),N(6),N(6)-trimethyl-L-lysyl-[protein] + 3 S-adenosyl-L-homocysteine + 3 H(+)</text>
        <dbReference type="Rhea" id="RHEA:54192"/>
        <dbReference type="Rhea" id="RHEA-COMP:9752"/>
        <dbReference type="Rhea" id="RHEA-COMP:13826"/>
        <dbReference type="ChEBI" id="CHEBI:15378"/>
        <dbReference type="ChEBI" id="CHEBI:29969"/>
        <dbReference type="ChEBI" id="CHEBI:57856"/>
        <dbReference type="ChEBI" id="CHEBI:59789"/>
        <dbReference type="ChEBI" id="CHEBI:61961"/>
    </reaction>
</comment>
<comment type="subcellular location">
    <subcellularLocation>
        <location evidence="1">Cytoplasm</location>
    </subcellularLocation>
</comment>
<comment type="similarity">
    <text evidence="1">Belongs to the methyltransferase superfamily. PrmA family.</text>
</comment>
<name>PRMA_BACCN</name>
<reference key="1">
    <citation type="journal article" date="2008" name="Chem. Biol. Interact.">
        <title>Extending the Bacillus cereus group genomics to putative food-borne pathogens of different toxicity.</title>
        <authorList>
            <person name="Lapidus A."/>
            <person name="Goltsman E."/>
            <person name="Auger S."/>
            <person name="Galleron N."/>
            <person name="Segurens B."/>
            <person name="Dossat C."/>
            <person name="Land M.L."/>
            <person name="Broussolle V."/>
            <person name="Brillard J."/>
            <person name="Guinebretiere M.-H."/>
            <person name="Sanchis V."/>
            <person name="Nguen-the C."/>
            <person name="Lereclus D."/>
            <person name="Richardson P."/>
            <person name="Wincker P."/>
            <person name="Weissenbach J."/>
            <person name="Ehrlich S.D."/>
            <person name="Sorokin A."/>
        </authorList>
    </citation>
    <scope>NUCLEOTIDE SEQUENCE [LARGE SCALE GENOMIC DNA]</scope>
    <source>
        <strain>DSM 22905 / CIP 110041 / 391-98 / NVH 391-98</strain>
    </source>
</reference>
<evidence type="ECO:0000255" key="1">
    <source>
        <dbReference type="HAMAP-Rule" id="MF_00735"/>
    </source>
</evidence>
<gene>
    <name evidence="1" type="primary">prmA</name>
    <name type="ordered locus">Bcer98_3038</name>
</gene>
<proteinExistence type="inferred from homology"/>